<organism>
    <name type="scientific">Xenopus tropicalis</name>
    <name type="common">Western clawed frog</name>
    <name type="synonym">Silurana tropicalis</name>
    <dbReference type="NCBI Taxonomy" id="8364"/>
    <lineage>
        <taxon>Eukaryota</taxon>
        <taxon>Metazoa</taxon>
        <taxon>Chordata</taxon>
        <taxon>Craniata</taxon>
        <taxon>Vertebrata</taxon>
        <taxon>Euteleostomi</taxon>
        <taxon>Amphibia</taxon>
        <taxon>Batrachia</taxon>
        <taxon>Anura</taxon>
        <taxon>Pipoidea</taxon>
        <taxon>Pipidae</taxon>
        <taxon>Xenopodinae</taxon>
        <taxon>Xenopus</taxon>
        <taxon>Silurana</taxon>
    </lineage>
</organism>
<gene>
    <name type="primary">nell2</name>
</gene>
<reference key="1">
    <citation type="submission" date="2006-12" db="EMBL/GenBank/DDBJ databases">
        <authorList>
            <consortium name="NIH - Xenopus Gene Collection (XGC) project"/>
        </authorList>
    </citation>
    <scope>NUCLEOTIDE SEQUENCE [LARGE SCALE MRNA]</scope>
    <source>
        <tissue>Brain</tissue>
    </source>
</reference>
<accession>A2VCU8</accession>
<name>NELL2_XENTR</name>
<protein>
    <recommendedName>
        <fullName>Protein kinase C-binding protein NELL2</fullName>
    </recommendedName>
    <alternativeName>
        <fullName>NEL-like protein 2</fullName>
    </alternativeName>
</protein>
<dbReference type="EMBL" id="BC128627">
    <property type="protein sequence ID" value="AAI28628.1"/>
    <property type="molecule type" value="mRNA"/>
</dbReference>
<dbReference type="RefSeq" id="NP_001090754.1">
    <property type="nucleotide sequence ID" value="NM_001097285.1"/>
</dbReference>
<dbReference type="SMR" id="A2VCU8"/>
<dbReference type="FunCoup" id="A2VCU8">
    <property type="interactions" value="274"/>
</dbReference>
<dbReference type="STRING" id="8364.ENSXETP00000003252"/>
<dbReference type="GlyCosmos" id="A2VCU8">
    <property type="glycosylation" value="6 sites, No reported glycans"/>
</dbReference>
<dbReference type="PaxDb" id="8364-ENSXETP00000032027"/>
<dbReference type="GeneID" id="100037839"/>
<dbReference type="KEGG" id="xtr:100037839"/>
<dbReference type="AGR" id="Xenbase:XB-GENE-852641"/>
<dbReference type="CTD" id="4753"/>
<dbReference type="Xenbase" id="XB-GENE-852641">
    <property type="gene designation" value="nell2"/>
</dbReference>
<dbReference type="eggNOG" id="KOG1217">
    <property type="taxonomic scope" value="Eukaryota"/>
</dbReference>
<dbReference type="HOGENOM" id="CLU_006887_0_0_1"/>
<dbReference type="InParanoid" id="A2VCU8"/>
<dbReference type="OMA" id="PENECCQ"/>
<dbReference type="OrthoDB" id="6516201at2759"/>
<dbReference type="PhylomeDB" id="A2VCU8"/>
<dbReference type="TreeFam" id="TF323325"/>
<dbReference type="Proteomes" id="UP000008143">
    <property type="component" value="Chromosome 3"/>
</dbReference>
<dbReference type="Bgee" id="ENSXETG00000014625">
    <property type="expression patterns" value="Expressed in brain and 9 other cell types or tissues"/>
</dbReference>
<dbReference type="ExpressionAtlas" id="A2VCU8">
    <property type="expression patterns" value="differential"/>
</dbReference>
<dbReference type="GO" id="GO:0005576">
    <property type="term" value="C:extracellular region"/>
    <property type="evidence" value="ECO:0000250"/>
    <property type="project" value="UniProtKB"/>
</dbReference>
<dbReference type="GO" id="GO:0005509">
    <property type="term" value="F:calcium ion binding"/>
    <property type="evidence" value="ECO:0000250"/>
    <property type="project" value="UniProtKB"/>
</dbReference>
<dbReference type="GO" id="GO:0009566">
    <property type="term" value="P:fertilization"/>
    <property type="evidence" value="ECO:0000250"/>
    <property type="project" value="UniProtKB"/>
</dbReference>
<dbReference type="CDD" id="cd00054">
    <property type="entry name" value="EGF_CA"/>
    <property type="match status" value="4"/>
</dbReference>
<dbReference type="CDD" id="cd00110">
    <property type="entry name" value="LamG"/>
    <property type="match status" value="1"/>
</dbReference>
<dbReference type="FunFam" id="2.10.25.10:FF:000038">
    <property type="entry name" value="Fibrillin 2"/>
    <property type="match status" value="2"/>
</dbReference>
<dbReference type="FunFam" id="2.10.25.10:FF:000121">
    <property type="entry name" value="Neural EGFL like 2"/>
    <property type="match status" value="1"/>
</dbReference>
<dbReference type="FunFam" id="2.10.25.10:FF:000120">
    <property type="entry name" value="Protein kinase C-binding protein NELL1"/>
    <property type="match status" value="1"/>
</dbReference>
<dbReference type="FunFam" id="2.10.25.10:FF:000211">
    <property type="entry name" value="Protein kinase C-binding protein NELL1"/>
    <property type="match status" value="1"/>
</dbReference>
<dbReference type="FunFam" id="2.60.120.200:FF:000015">
    <property type="entry name" value="protein kinase C-binding protein NELL1"/>
    <property type="match status" value="1"/>
</dbReference>
<dbReference type="FunFam" id="2.10.70.10:FF:000023">
    <property type="entry name" value="protein kinase C-binding protein NELL2"/>
    <property type="match status" value="1"/>
</dbReference>
<dbReference type="Gene3D" id="2.60.120.200">
    <property type="match status" value="1"/>
</dbReference>
<dbReference type="Gene3D" id="6.20.200.20">
    <property type="match status" value="2"/>
</dbReference>
<dbReference type="Gene3D" id="2.10.70.10">
    <property type="entry name" value="Complement Module, domain 1"/>
    <property type="match status" value="1"/>
</dbReference>
<dbReference type="Gene3D" id="2.10.25.10">
    <property type="entry name" value="Laminin"/>
    <property type="match status" value="6"/>
</dbReference>
<dbReference type="InterPro" id="IPR013320">
    <property type="entry name" value="ConA-like_dom_sf"/>
</dbReference>
<dbReference type="InterPro" id="IPR001881">
    <property type="entry name" value="EGF-like_Ca-bd_dom"/>
</dbReference>
<dbReference type="InterPro" id="IPR000742">
    <property type="entry name" value="EGF-like_dom"/>
</dbReference>
<dbReference type="InterPro" id="IPR000152">
    <property type="entry name" value="EGF-type_Asp/Asn_hydroxyl_site"/>
</dbReference>
<dbReference type="InterPro" id="IPR018097">
    <property type="entry name" value="EGF_Ca-bd_CS"/>
</dbReference>
<dbReference type="InterPro" id="IPR024731">
    <property type="entry name" value="EGF_dom"/>
</dbReference>
<dbReference type="InterPro" id="IPR009030">
    <property type="entry name" value="Growth_fac_rcpt_cys_sf"/>
</dbReference>
<dbReference type="InterPro" id="IPR001791">
    <property type="entry name" value="Laminin_G"/>
</dbReference>
<dbReference type="InterPro" id="IPR049883">
    <property type="entry name" value="NOTCH1_EGF-like"/>
</dbReference>
<dbReference type="InterPro" id="IPR051586">
    <property type="entry name" value="PKC-binding_NELL"/>
</dbReference>
<dbReference type="InterPro" id="IPR048287">
    <property type="entry name" value="TSPN-like_N"/>
</dbReference>
<dbReference type="InterPro" id="IPR001007">
    <property type="entry name" value="VWF_dom"/>
</dbReference>
<dbReference type="PANTHER" id="PTHR24042">
    <property type="entry name" value="NEL HOMOLOG"/>
    <property type="match status" value="1"/>
</dbReference>
<dbReference type="PANTHER" id="PTHR24042:SF0">
    <property type="entry name" value="PROTEIN KINASE C-BINDING PROTEIN NELL2"/>
    <property type="match status" value="1"/>
</dbReference>
<dbReference type="Pfam" id="PF12947">
    <property type="entry name" value="EGF_3"/>
    <property type="match status" value="1"/>
</dbReference>
<dbReference type="Pfam" id="PF07645">
    <property type="entry name" value="EGF_CA"/>
    <property type="match status" value="3"/>
</dbReference>
<dbReference type="Pfam" id="PF02210">
    <property type="entry name" value="Laminin_G_2"/>
    <property type="match status" value="1"/>
</dbReference>
<dbReference type="Pfam" id="PF00093">
    <property type="entry name" value="VWC"/>
    <property type="match status" value="2"/>
</dbReference>
<dbReference type="SMART" id="SM00181">
    <property type="entry name" value="EGF"/>
    <property type="match status" value="6"/>
</dbReference>
<dbReference type="SMART" id="SM00179">
    <property type="entry name" value="EGF_CA"/>
    <property type="match status" value="5"/>
</dbReference>
<dbReference type="SMART" id="SM00282">
    <property type="entry name" value="LamG"/>
    <property type="match status" value="1"/>
</dbReference>
<dbReference type="SMART" id="SM00210">
    <property type="entry name" value="TSPN"/>
    <property type="match status" value="1"/>
</dbReference>
<dbReference type="SMART" id="SM00214">
    <property type="entry name" value="VWC"/>
    <property type="match status" value="3"/>
</dbReference>
<dbReference type="SMART" id="SM00215">
    <property type="entry name" value="VWC_out"/>
    <property type="match status" value="2"/>
</dbReference>
<dbReference type="SUPFAM" id="SSF49899">
    <property type="entry name" value="Concanavalin A-like lectins/glucanases"/>
    <property type="match status" value="1"/>
</dbReference>
<dbReference type="SUPFAM" id="SSF57196">
    <property type="entry name" value="EGF/Laminin"/>
    <property type="match status" value="2"/>
</dbReference>
<dbReference type="SUPFAM" id="SSF57603">
    <property type="entry name" value="FnI-like domain"/>
    <property type="match status" value="2"/>
</dbReference>
<dbReference type="SUPFAM" id="SSF57184">
    <property type="entry name" value="Growth factor receptor domain"/>
    <property type="match status" value="1"/>
</dbReference>
<dbReference type="PROSITE" id="PS00010">
    <property type="entry name" value="ASX_HYDROXYL"/>
    <property type="match status" value="3"/>
</dbReference>
<dbReference type="PROSITE" id="PS00022">
    <property type="entry name" value="EGF_1"/>
    <property type="match status" value="1"/>
</dbReference>
<dbReference type="PROSITE" id="PS01186">
    <property type="entry name" value="EGF_2"/>
    <property type="match status" value="3"/>
</dbReference>
<dbReference type="PROSITE" id="PS50026">
    <property type="entry name" value="EGF_3"/>
    <property type="match status" value="6"/>
</dbReference>
<dbReference type="PROSITE" id="PS01187">
    <property type="entry name" value="EGF_CA"/>
    <property type="match status" value="3"/>
</dbReference>
<dbReference type="PROSITE" id="PS01208">
    <property type="entry name" value="VWFC_1"/>
    <property type="match status" value="2"/>
</dbReference>
<dbReference type="PROSITE" id="PS50184">
    <property type="entry name" value="VWFC_2"/>
    <property type="match status" value="3"/>
</dbReference>
<keyword id="KW-0106">Calcium</keyword>
<keyword id="KW-1015">Disulfide bond</keyword>
<keyword id="KW-0245">EGF-like domain</keyword>
<keyword id="KW-0325">Glycoprotein</keyword>
<keyword id="KW-0479">Metal-binding</keyword>
<keyword id="KW-1185">Reference proteome</keyword>
<keyword id="KW-0677">Repeat</keyword>
<keyword id="KW-0964">Secreted</keyword>
<keyword id="KW-0732">Signal</keyword>
<comment type="function">
    <text evidence="1 2">May regulate neuronal differentiation, polarization and axon guidance.</text>
</comment>
<comment type="subunit">
    <text evidence="2">Homotrimer.</text>
</comment>
<comment type="subcellular location">
    <subcellularLocation>
        <location evidence="2">Secreted</location>
    </subcellularLocation>
</comment>
<evidence type="ECO:0000250" key="1">
    <source>
        <dbReference type="UniProtKB" id="Q61220"/>
    </source>
</evidence>
<evidence type="ECO:0000250" key="2">
    <source>
        <dbReference type="UniProtKB" id="Q62918"/>
    </source>
</evidence>
<evidence type="ECO:0000250" key="3">
    <source>
        <dbReference type="UniProtKB" id="Q99435"/>
    </source>
</evidence>
<evidence type="ECO:0000255" key="4"/>
<evidence type="ECO:0000255" key="5">
    <source>
        <dbReference type="PROSITE-ProRule" id="PRU00076"/>
    </source>
</evidence>
<evidence type="ECO:0000255" key="6">
    <source>
        <dbReference type="PROSITE-ProRule" id="PRU00220"/>
    </source>
</evidence>
<proteinExistence type="evidence at transcript level"/>
<feature type="signal peptide" evidence="3">
    <location>
        <begin position="1"/>
        <end position="19"/>
    </location>
</feature>
<feature type="chain" id="PRO_0000354685" description="Protein kinase C-binding protein NELL2">
    <location>
        <begin position="20"/>
        <end position="814"/>
    </location>
</feature>
<feature type="domain" description="Laminin G-like">
    <location>
        <begin position="53"/>
        <end position="226"/>
    </location>
</feature>
<feature type="domain" description="VWFC 1" evidence="6">
    <location>
        <begin position="270"/>
        <end position="329"/>
    </location>
</feature>
<feature type="domain" description="EGF-like 1" evidence="5">
    <location>
        <begin position="395"/>
        <end position="437"/>
    </location>
</feature>
<feature type="domain" description="EGF-like 2; calcium-binding" evidence="5">
    <location>
        <begin position="438"/>
        <end position="479"/>
    </location>
</feature>
<feature type="domain" description="EGF-like 3; calcium-binding" evidence="5">
    <location>
        <begin position="480"/>
        <end position="520"/>
    </location>
</feature>
<feature type="domain" description="EGF-like 4" evidence="5">
    <location>
        <begin position="521"/>
        <end position="551"/>
    </location>
</feature>
<feature type="domain" description="EGF-like 5; calcium-binding" evidence="5">
    <location>
        <begin position="553"/>
        <end position="599"/>
    </location>
</feature>
<feature type="domain" description="EGF-like 6; calcium-binding" evidence="5">
    <location>
        <begin position="600"/>
        <end position="635"/>
    </location>
</feature>
<feature type="domain" description="VWFC 2" evidence="6">
    <location>
        <begin position="636"/>
        <end position="691"/>
    </location>
</feature>
<feature type="domain" description="VWFC 3" evidence="6">
    <location>
        <begin position="696"/>
        <end position="754"/>
    </location>
</feature>
<feature type="binding site" evidence="3">
    <location>
        <position position="438"/>
    </location>
    <ligand>
        <name>Ca(2+)</name>
        <dbReference type="ChEBI" id="CHEBI:29108"/>
    </ligand>
</feature>
<feature type="binding site" evidence="3">
    <location>
        <position position="439"/>
    </location>
    <ligand>
        <name>Ca(2+)</name>
        <dbReference type="ChEBI" id="CHEBI:29108"/>
    </ligand>
</feature>
<feature type="binding site" evidence="3">
    <location>
        <position position="441"/>
    </location>
    <ligand>
        <name>Ca(2+)</name>
        <dbReference type="ChEBI" id="CHEBI:29108"/>
    </ligand>
</feature>
<feature type="binding site" evidence="3">
    <location>
        <position position="457"/>
    </location>
    <ligand>
        <name>Ca(2+)</name>
        <dbReference type="ChEBI" id="CHEBI:29108"/>
    </ligand>
</feature>
<feature type="binding site" evidence="3">
    <location>
        <position position="458"/>
    </location>
    <ligand>
        <name>Ca(2+)</name>
        <dbReference type="ChEBI" id="CHEBI:29108"/>
    </ligand>
</feature>
<feature type="binding site" evidence="3">
    <location>
        <position position="461"/>
    </location>
    <ligand>
        <name>Ca(2+)</name>
        <dbReference type="ChEBI" id="CHEBI:29108"/>
    </ligand>
</feature>
<feature type="binding site" evidence="3">
    <location>
        <position position="553"/>
    </location>
    <ligand>
        <name>Ca(2+)</name>
        <dbReference type="ChEBI" id="CHEBI:29108"/>
    </ligand>
</feature>
<feature type="binding site" evidence="3">
    <location>
        <position position="554"/>
    </location>
    <ligand>
        <name>Ca(2+)</name>
        <dbReference type="ChEBI" id="CHEBI:29108"/>
    </ligand>
</feature>
<feature type="binding site" evidence="3">
    <location>
        <position position="556"/>
    </location>
    <ligand>
        <name>Ca(2+)</name>
        <dbReference type="ChEBI" id="CHEBI:29108"/>
    </ligand>
</feature>
<feature type="binding site" evidence="3">
    <location>
        <position position="572"/>
    </location>
    <ligand>
        <name>Ca(2+)</name>
        <dbReference type="ChEBI" id="CHEBI:29108"/>
    </ligand>
</feature>
<feature type="binding site" evidence="3">
    <location>
        <position position="573"/>
    </location>
    <ligand>
        <name>Ca(2+)</name>
        <dbReference type="ChEBI" id="CHEBI:29108"/>
    </ligand>
</feature>
<feature type="binding site" evidence="3">
    <location>
        <position position="576"/>
    </location>
    <ligand>
        <name>Ca(2+)</name>
        <dbReference type="ChEBI" id="CHEBI:29108"/>
    </ligand>
</feature>
<feature type="binding site" evidence="3">
    <location>
        <position position="600"/>
    </location>
    <ligand>
        <name>Ca(2+)</name>
        <dbReference type="ChEBI" id="CHEBI:29108"/>
    </ligand>
</feature>
<feature type="binding site" evidence="3">
    <location>
        <position position="601"/>
    </location>
    <ligand>
        <name>Ca(2+)</name>
        <dbReference type="ChEBI" id="CHEBI:29108"/>
    </ligand>
</feature>
<feature type="binding site" evidence="3">
    <location>
        <position position="603"/>
    </location>
    <ligand>
        <name>Ca(2+)</name>
        <dbReference type="ChEBI" id="CHEBI:29108"/>
    </ligand>
</feature>
<feature type="binding site" evidence="3">
    <location>
        <position position="619"/>
    </location>
    <ligand>
        <name>Ca(2+)</name>
        <dbReference type="ChEBI" id="CHEBI:29108"/>
    </ligand>
</feature>
<feature type="binding site" evidence="3">
    <location>
        <position position="620"/>
    </location>
    <ligand>
        <name>Ca(2+)</name>
        <dbReference type="ChEBI" id="CHEBI:29108"/>
    </ligand>
</feature>
<feature type="binding site" evidence="3">
    <location>
        <position position="623"/>
    </location>
    <ligand>
        <name>Ca(2+)</name>
        <dbReference type="ChEBI" id="CHEBI:29108"/>
    </ligand>
</feature>
<feature type="glycosylation site" description="N-linked (GlcNAc...) asparagine" evidence="4">
    <location>
        <position position="51"/>
    </location>
</feature>
<feature type="glycosylation site" description="N-linked (GlcNAc...) asparagine" evidence="4">
    <location>
        <position position="223"/>
    </location>
</feature>
<feature type="glycosylation site" description="N-linked (GlcNAc...) asparagine" evidence="4">
    <location>
        <position position="296"/>
    </location>
</feature>
<feature type="glycosylation site" description="N-linked (GlcNAc...) asparagine" evidence="4">
    <location>
        <position position="515"/>
    </location>
</feature>
<feature type="glycosylation site" description="N-linked (GlcNAc...) asparagine" evidence="4">
    <location>
        <position position="613"/>
    </location>
</feature>
<feature type="glycosylation site" description="N-linked (GlcNAc...) asparagine" evidence="4">
    <location>
        <position position="633"/>
    </location>
</feature>
<feature type="disulfide bond" evidence="3">
    <location>
        <begin position="399"/>
        <end position="411"/>
    </location>
</feature>
<feature type="disulfide bond" evidence="3">
    <location>
        <begin position="405"/>
        <end position="420"/>
    </location>
</feature>
<feature type="disulfide bond" evidence="3">
    <location>
        <begin position="422"/>
        <end position="436"/>
    </location>
</feature>
<feature type="disulfide bond" evidence="3">
    <location>
        <begin position="442"/>
        <end position="455"/>
    </location>
</feature>
<feature type="disulfide bond" evidence="3">
    <location>
        <begin position="449"/>
        <end position="464"/>
    </location>
</feature>
<feature type="disulfide bond" evidence="3">
    <location>
        <begin position="466"/>
        <end position="478"/>
    </location>
</feature>
<feature type="disulfide bond" evidence="3">
    <location>
        <begin position="484"/>
        <end position="497"/>
    </location>
</feature>
<feature type="disulfide bond" evidence="3">
    <location>
        <begin position="491"/>
        <end position="506"/>
    </location>
</feature>
<feature type="disulfide bond" evidence="3">
    <location>
        <begin position="508"/>
        <end position="519"/>
    </location>
</feature>
<feature type="disulfide bond" evidence="3">
    <location>
        <begin position="523"/>
        <end position="533"/>
    </location>
</feature>
<feature type="disulfide bond" evidence="3">
    <location>
        <begin position="527"/>
        <end position="539"/>
    </location>
</feature>
<feature type="disulfide bond" evidence="3">
    <location>
        <begin position="541"/>
        <end position="550"/>
    </location>
</feature>
<feature type="disulfide bond" evidence="3">
    <location>
        <begin position="557"/>
        <end position="570"/>
    </location>
</feature>
<feature type="disulfide bond" evidence="3">
    <location>
        <begin position="564"/>
        <end position="579"/>
    </location>
</feature>
<feature type="disulfide bond" evidence="3">
    <location>
        <begin position="581"/>
        <end position="598"/>
    </location>
</feature>
<feature type="disulfide bond" evidence="3">
    <location>
        <begin position="604"/>
        <end position="617"/>
    </location>
</feature>
<feature type="disulfide bond" evidence="3">
    <location>
        <begin position="611"/>
        <end position="626"/>
    </location>
</feature>
<feature type="disulfide bond" evidence="3">
    <location>
        <begin position="628"/>
        <end position="634"/>
    </location>
</feature>
<sequence length="814" mass="90762">MEFILGIFCVIFCLRAGAGFGVDPSLQIDIFEDFQLGEATPGVQQVQGFHNRSKAFLFQDTSRSIKASAETAERIFTKLRNKHEFTILVTLKQAMLNSGVILSIHHADHRYLELESSGHRNEVRLHYRSGSHRSQTEVFPYILADDKWHRFSIAISASHLVLHIDCNKIYERIVEKTFMDVPPGTALWVGQRNNVHGYFKGIMQDLQIVVMPQGFISQCPDLNRTCPTCNDFHGLVQKIMELQDILAKTSAKLSRAEQRMNRLDQCYCERSCTVKGNIYRELESWMDGCKKCTCTNGTAQCETLTCSVPNCLSGFAPAYVPGKCCKECQPVCMYQGQMYFEGEQEAVQSSSGACVLFQCKSNTMQRIESPECLPLNCPQSQHITLRSGCCKVCKGHDFCSEGHNCVEYSICKNLNDKAVCICRDGFRALREDSAYCEDIDECTEGRHYCRENTVCVNTPGSFMCVCQTGYLKIDDYSCTEHNECATNQHSCDENAVCYNTVGGHNCVCQPGYTGNGTVCKAFCTDGCRNGGTCIAPNICACPQGFTGPSCEADIDECTEGFVQCDSRANCINLPGWYHCECRDGYHDNGMFSLSGESCEDIDECATGRHSCSNDTVCFNLDGGFDCRCPHGKNCSGDCTHEGKIKHNGQIWVLENDRCSVCSCQVGLVMCRRMVCDCENPTVDLFCCPECDPRLSSQCLHQSGELTYKSGDTWVQNCQQCRCLQGEVDCWPLPCPEIDCEFSVVPESECCPRCISDPCQADIIRNDITKTCVDETNVVRFTGSSWIKHGTECTLCQCKNGHMCCSVDPQCLQEL</sequence>